<keyword id="KW-0963">Cytoplasm</keyword>
<keyword id="KW-0238">DNA-binding</keyword>
<keyword id="KW-0678">Repressor</keyword>
<keyword id="KW-0804">Transcription</keyword>
<keyword id="KW-0805">Transcription regulation</keyword>
<feature type="chain" id="PRO_1000147204" description="Global transcriptional regulator CodY">
    <location>
        <begin position="1"/>
        <end position="258"/>
    </location>
</feature>
<feature type="DNA-binding region" description="H-T-H motif" evidence="1">
    <location>
        <begin position="204"/>
        <end position="223"/>
    </location>
</feature>
<feature type="region of interest" description="GAF domain" evidence="1">
    <location>
        <begin position="1"/>
        <end position="156"/>
    </location>
</feature>
<name>CODY_CLOK1</name>
<dbReference type="EMBL" id="AP009049">
    <property type="protein sequence ID" value="BAH06362.1"/>
    <property type="molecule type" value="Genomic_DNA"/>
</dbReference>
<dbReference type="RefSeq" id="WP_012101805.1">
    <property type="nucleotide sequence ID" value="NC_011837.1"/>
</dbReference>
<dbReference type="SMR" id="B9E1I7"/>
<dbReference type="KEGG" id="ckr:CKR_1311"/>
<dbReference type="HOGENOM" id="CLU_089581_0_0_9"/>
<dbReference type="Proteomes" id="UP000007969">
    <property type="component" value="Chromosome"/>
</dbReference>
<dbReference type="GO" id="GO:0005737">
    <property type="term" value="C:cytoplasm"/>
    <property type="evidence" value="ECO:0007669"/>
    <property type="project" value="UniProtKB-SubCell"/>
</dbReference>
<dbReference type="GO" id="GO:0003677">
    <property type="term" value="F:DNA binding"/>
    <property type="evidence" value="ECO:0007669"/>
    <property type="project" value="UniProtKB-UniRule"/>
</dbReference>
<dbReference type="GO" id="GO:0003700">
    <property type="term" value="F:DNA-binding transcription factor activity"/>
    <property type="evidence" value="ECO:0007669"/>
    <property type="project" value="InterPro"/>
</dbReference>
<dbReference type="GO" id="GO:0005525">
    <property type="term" value="F:GTP binding"/>
    <property type="evidence" value="ECO:0007669"/>
    <property type="project" value="InterPro"/>
</dbReference>
<dbReference type="GO" id="GO:0045892">
    <property type="term" value="P:negative regulation of DNA-templated transcription"/>
    <property type="evidence" value="ECO:0007669"/>
    <property type="project" value="UniProtKB-UniRule"/>
</dbReference>
<dbReference type="FunFam" id="1.10.10.10:FF:000034">
    <property type="entry name" value="GTP-sensing transcriptional pleiotropic repressor CodY"/>
    <property type="match status" value="1"/>
</dbReference>
<dbReference type="Gene3D" id="3.30.450.40">
    <property type="match status" value="1"/>
</dbReference>
<dbReference type="Gene3D" id="1.10.10.10">
    <property type="entry name" value="Winged helix-like DNA-binding domain superfamily/Winged helix DNA-binding domain"/>
    <property type="match status" value="1"/>
</dbReference>
<dbReference type="HAMAP" id="MF_00621">
    <property type="entry name" value="HTH_type_CodY"/>
    <property type="match status" value="1"/>
</dbReference>
<dbReference type="InterPro" id="IPR014154">
    <property type="entry name" value="CodY"/>
</dbReference>
<dbReference type="InterPro" id="IPR029016">
    <property type="entry name" value="GAF-like_dom_sf"/>
</dbReference>
<dbReference type="InterPro" id="IPR013198">
    <property type="entry name" value="GTP_trans_reg_CodY_C"/>
</dbReference>
<dbReference type="InterPro" id="IPR010312">
    <property type="entry name" value="Transc_reg_CodY_N"/>
</dbReference>
<dbReference type="InterPro" id="IPR036388">
    <property type="entry name" value="WH-like_DNA-bd_sf"/>
</dbReference>
<dbReference type="InterPro" id="IPR036390">
    <property type="entry name" value="WH_DNA-bd_sf"/>
</dbReference>
<dbReference type="NCBIfam" id="TIGR02787">
    <property type="entry name" value="codY_Gpos"/>
    <property type="match status" value="1"/>
</dbReference>
<dbReference type="NCBIfam" id="NF003170">
    <property type="entry name" value="PRK04158.1"/>
    <property type="match status" value="1"/>
</dbReference>
<dbReference type="PANTHER" id="PTHR40062:SF1">
    <property type="entry name" value="GLOBAL TRANSCRIPTIONAL REGULATOR CODY"/>
    <property type="match status" value="1"/>
</dbReference>
<dbReference type="PANTHER" id="PTHR40062">
    <property type="entry name" value="GTP-SENSING TRANSCRIPTIONAL PLEIOTROPIC REPRESSOR CODY"/>
    <property type="match status" value="1"/>
</dbReference>
<dbReference type="Pfam" id="PF06018">
    <property type="entry name" value="CodY"/>
    <property type="match status" value="1"/>
</dbReference>
<dbReference type="Pfam" id="PF08222">
    <property type="entry name" value="HTH_CodY"/>
    <property type="match status" value="1"/>
</dbReference>
<dbReference type="PIRSF" id="PIRSF011572">
    <property type="entry name" value="GTP_sensing_CodY"/>
    <property type="match status" value="1"/>
</dbReference>
<dbReference type="SUPFAM" id="SSF46785">
    <property type="entry name" value="Winged helix' DNA-binding domain"/>
    <property type="match status" value="1"/>
</dbReference>
<gene>
    <name evidence="1" type="primary">codY</name>
    <name type="ordered locus">CKR_1311</name>
</gene>
<comment type="function">
    <text evidence="1">DNA-binding global transcriptional regulator which is involved in the adaptive response to starvation and acts by directly or indirectly controlling the expression of numerous genes in response to nutrient availability. During rapid exponential growth, CodY is highly active and represses genes whose products allow adaptation to nutrient depletion.</text>
</comment>
<comment type="subcellular location">
    <subcellularLocation>
        <location evidence="1">Cytoplasm</location>
    </subcellularLocation>
</comment>
<comment type="similarity">
    <text evidence="1">Belongs to the CodY family.</text>
</comment>
<sequence length="258" mass="28611">MSTLLDKTRKLNKILQKSGVEPVVFDDICKILSEVLGCNVYVISRKGKVLGYNFPDGFECSTVKNKIISEMRFPEQYNNKLLNAHETLPNLSNHGICVFEDGTPCDLEDKVTTIVPIIGNRERLGTLLLASFGEKFTDEDLVLGEYSATIVGLEILKSKNDEIEEEARKKAVVQLAIGTLSYSELEAVEHIFNELDGKEGLLVASKIADKVGITRSVIVNALRKFESAGVIESRSLGMKGTHIKILNDKLLDELKKIK</sequence>
<protein>
    <recommendedName>
        <fullName evidence="1">Global transcriptional regulator CodY</fullName>
    </recommendedName>
</protein>
<proteinExistence type="inferred from homology"/>
<reference key="1">
    <citation type="submission" date="2005-09" db="EMBL/GenBank/DDBJ databases">
        <title>Complete genome sequence of Clostridium kluyveri and comparative genomics of Clostridia species.</title>
        <authorList>
            <person name="Inui M."/>
            <person name="Nonaka H."/>
            <person name="Shinoda Y."/>
            <person name="Ikenaga Y."/>
            <person name="Abe M."/>
            <person name="Naito K."/>
            <person name="Vertes A.A."/>
            <person name="Yukawa H."/>
        </authorList>
    </citation>
    <scope>NUCLEOTIDE SEQUENCE [LARGE SCALE GENOMIC DNA]</scope>
    <source>
        <strain>NBRC 12016</strain>
    </source>
</reference>
<accession>B9E1I7</accession>
<evidence type="ECO:0000255" key="1">
    <source>
        <dbReference type="HAMAP-Rule" id="MF_00621"/>
    </source>
</evidence>
<organism>
    <name type="scientific">Clostridium kluyveri (strain NBRC 12016)</name>
    <dbReference type="NCBI Taxonomy" id="583346"/>
    <lineage>
        <taxon>Bacteria</taxon>
        <taxon>Bacillati</taxon>
        <taxon>Bacillota</taxon>
        <taxon>Clostridia</taxon>
        <taxon>Eubacteriales</taxon>
        <taxon>Clostridiaceae</taxon>
        <taxon>Clostridium</taxon>
    </lineage>
</organism>